<name>TM2D2_RAT</name>
<evidence type="ECO:0000255" key="1"/>
<evidence type="ECO:0000255" key="2">
    <source>
        <dbReference type="PROSITE-ProRule" id="PRU00498"/>
    </source>
</evidence>
<evidence type="ECO:0000305" key="3"/>
<proteinExistence type="evidence at transcript level"/>
<feature type="signal peptide" evidence="1">
    <location>
        <begin position="1"/>
        <end position="22"/>
    </location>
</feature>
<feature type="chain" id="PRO_0000298985" description="TM2 domain-containing protein 2" evidence="1">
    <location>
        <begin position="23"/>
        <end position="213"/>
    </location>
</feature>
<feature type="topological domain" description="Extracellular" evidence="3">
    <location>
        <begin position="23"/>
        <end position="143"/>
    </location>
</feature>
<feature type="transmembrane region" description="Helical" evidence="1">
    <location>
        <begin position="144"/>
        <end position="164"/>
    </location>
</feature>
<feature type="topological domain" description="Cytoplasmic" evidence="3">
    <location>
        <begin position="165"/>
        <end position="181"/>
    </location>
</feature>
<feature type="transmembrane region" description="Helical" evidence="1">
    <location>
        <begin position="182"/>
        <end position="202"/>
    </location>
</feature>
<feature type="topological domain" description="Extracellular" evidence="3">
    <location>
        <begin position="203"/>
        <end position="213"/>
    </location>
</feature>
<feature type="domain" description="TM2" evidence="1">
    <location>
        <begin position="146"/>
        <end position="194"/>
    </location>
</feature>
<feature type="glycosylation site" description="N-linked (GlcNAc...) asparagine" evidence="2">
    <location>
        <position position="37"/>
    </location>
</feature>
<feature type="glycosylation site" description="N-linked (GlcNAc...) asparagine" evidence="2">
    <location>
        <position position="91"/>
    </location>
</feature>
<reference key="1">
    <citation type="journal article" date="2004" name="Genome Res.">
        <title>The status, quality, and expansion of the NIH full-length cDNA project: the Mammalian Gene Collection (MGC).</title>
        <authorList>
            <consortium name="The MGC Project Team"/>
        </authorList>
    </citation>
    <scope>NUCLEOTIDE SEQUENCE [LARGE SCALE MRNA]</scope>
    <source>
        <tissue>Thymus</tissue>
    </source>
</reference>
<accession>Q566R2</accession>
<protein>
    <recommendedName>
        <fullName>TM2 domain-containing protein 2</fullName>
    </recommendedName>
</protein>
<comment type="subcellular location">
    <subcellularLocation>
        <location evidence="3">Membrane</location>
        <topology evidence="3">Multi-pass membrane protein</topology>
    </subcellularLocation>
</comment>
<comment type="similarity">
    <text evidence="3">Belongs to the TM2 family.</text>
</comment>
<sequence>MVLGGCPVSYLLLCGQAALLLGNLLLLHCVSRSHSFNATAELDLTPSGAAHLEGPAASSWEYSDPNSPVILCSYLPDEFVDCDAPVDHVGNATAYQELGYGCLKFGGQAYSDVEHTAVQCRALEGIECASPRTFLRKNKPCIKYTGHYFITTLLYSFFLGCFGVDRFCLGHTGTAVGKLLTLGGLGIWWFVDLILLITGGLMPSDGSNWCTVY</sequence>
<keyword id="KW-0325">Glycoprotein</keyword>
<keyword id="KW-0472">Membrane</keyword>
<keyword id="KW-1185">Reference proteome</keyword>
<keyword id="KW-0732">Signal</keyword>
<keyword id="KW-0812">Transmembrane</keyword>
<keyword id="KW-1133">Transmembrane helix</keyword>
<organism>
    <name type="scientific">Rattus norvegicus</name>
    <name type="common">Rat</name>
    <dbReference type="NCBI Taxonomy" id="10116"/>
    <lineage>
        <taxon>Eukaryota</taxon>
        <taxon>Metazoa</taxon>
        <taxon>Chordata</taxon>
        <taxon>Craniata</taxon>
        <taxon>Vertebrata</taxon>
        <taxon>Euteleostomi</taxon>
        <taxon>Mammalia</taxon>
        <taxon>Eutheria</taxon>
        <taxon>Euarchontoglires</taxon>
        <taxon>Glires</taxon>
        <taxon>Rodentia</taxon>
        <taxon>Myomorpha</taxon>
        <taxon>Muroidea</taxon>
        <taxon>Muridae</taxon>
        <taxon>Murinae</taxon>
        <taxon>Rattus</taxon>
    </lineage>
</organism>
<dbReference type="EMBL" id="BC093382">
    <property type="protein sequence ID" value="AAH93382.1"/>
    <property type="molecule type" value="mRNA"/>
</dbReference>
<dbReference type="RefSeq" id="NP_001017444.1">
    <property type="nucleotide sequence ID" value="NM_001017444.1"/>
</dbReference>
<dbReference type="FunCoup" id="Q566R2">
    <property type="interactions" value="1949"/>
</dbReference>
<dbReference type="STRING" id="10116.ENSRNOP00000022425"/>
<dbReference type="GlyCosmos" id="Q566R2">
    <property type="glycosylation" value="1 site, No reported glycans"/>
</dbReference>
<dbReference type="GlyGen" id="Q566R2">
    <property type="glycosylation" value="2 sites"/>
</dbReference>
<dbReference type="PaxDb" id="10116-ENSRNOP00000022425"/>
<dbReference type="Ensembl" id="ENSRNOT00000112655.1">
    <property type="protein sequence ID" value="ENSRNOP00000094884.1"/>
    <property type="gene ID" value="ENSRNOG00000016559.7"/>
</dbReference>
<dbReference type="GeneID" id="290833"/>
<dbReference type="KEGG" id="rno:290833"/>
<dbReference type="UCSC" id="RGD:1306769">
    <property type="organism name" value="rat"/>
</dbReference>
<dbReference type="AGR" id="RGD:1306769"/>
<dbReference type="CTD" id="83877"/>
<dbReference type="RGD" id="1306769">
    <property type="gene designation" value="Tm2d2"/>
</dbReference>
<dbReference type="eggNOG" id="KOG4272">
    <property type="taxonomic scope" value="Eukaryota"/>
</dbReference>
<dbReference type="GeneTree" id="ENSGT00730000111181"/>
<dbReference type="HOGENOM" id="CLU_084872_3_0_1"/>
<dbReference type="InParanoid" id="Q566R2"/>
<dbReference type="OMA" id="PIDHKGN"/>
<dbReference type="OrthoDB" id="408511at2759"/>
<dbReference type="PhylomeDB" id="Q566R2"/>
<dbReference type="TreeFam" id="TF314896"/>
<dbReference type="PRO" id="PR:Q566R2"/>
<dbReference type="Proteomes" id="UP000002494">
    <property type="component" value="Chromosome 16"/>
</dbReference>
<dbReference type="Bgee" id="ENSRNOG00000016559">
    <property type="expression patterns" value="Expressed in quadriceps femoris and 20 other cell types or tissues"/>
</dbReference>
<dbReference type="GO" id="GO:0016020">
    <property type="term" value="C:membrane"/>
    <property type="evidence" value="ECO:0007669"/>
    <property type="project" value="UniProtKB-SubCell"/>
</dbReference>
<dbReference type="InterPro" id="IPR007829">
    <property type="entry name" value="TM2"/>
</dbReference>
<dbReference type="InterPro" id="IPR050932">
    <property type="entry name" value="TM2D1-3-like"/>
</dbReference>
<dbReference type="PANTHER" id="PTHR21016">
    <property type="entry name" value="BETA-AMYLOID BINDING PROTEIN-RELATED"/>
    <property type="match status" value="1"/>
</dbReference>
<dbReference type="PANTHER" id="PTHR21016:SF4">
    <property type="entry name" value="TM2 DOMAIN-CONTAINING PROTEIN 2"/>
    <property type="match status" value="1"/>
</dbReference>
<dbReference type="Pfam" id="PF05154">
    <property type="entry name" value="TM2"/>
    <property type="match status" value="1"/>
</dbReference>
<gene>
    <name type="primary">Tm2d2</name>
</gene>